<organism>
    <name type="scientific">Drosophila virilis</name>
    <name type="common">Fruit fly</name>
    <dbReference type="NCBI Taxonomy" id="7244"/>
    <lineage>
        <taxon>Eukaryota</taxon>
        <taxon>Metazoa</taxon>
        <taxon>Ecdysozoa</taxon>
        <taxon>Arthropoda</taxon>
        <taxon>Hexapoda</taxon>
        <taxon>Insecta</taxon>
        <taxon>Pterygota</taxon>
        <taxon>Neoptera</taxon>
        <taxon>Endopterygota</taxon>
        <taxon>Diptera</taxon>
        <taxon>Brachycera</taxon>
        <taxon>Muscomorpha</taxon>
        <taxon>Ephydroidea</taxon>
        <taxon>Drosophilidae</taxon>
        <taxon>Drosophila</taxon>
    </lineage>
</organism>
<sequence length="298" mass="32694">MSKLISYAAKNTLRNTRLGANPICQHATRDYMHLAAASAARNTYSTPAVGFAKQPVLRQAVNTVAVMGQISRRSMFIQTQDTPNPESLKFLPGVDVLGKGNTYDFPSGSAAHCSPLAKLLFRVEGVRAVFFGGDFITISKEESGEWGLIKPEVFAVIMDFFASGLPVIHEARPNADTEILEDDDETVMMIKELLDTRIRPTVQEDGGDIVFMGYENGIVKLKMQGSCSSCPSSIVTLKNGVQNMLQFYIPEVESVEQVFDDADKMANKEFERFEKSLMQKESVNQPNAPVNIGGGTPN</sequence>
<comment type="function">
    <text evidence="1">Molecular scaffold for [Fe-S] cluster assembly of mitochondrial iron-sulfur proteins.</text>
</comment>
<comment type="subcellular location">
    <subcellularLocation>
        <location evidence="2">Mitochondrion</location>
    </subcellularLocation>
</comment>
<comment type="similarity">
    <text evidence="4">Belongs to the NifU family.</text>
</comment>
<reference evidence="5" key="1">
    <citation type="journal article" date="2007" name="Nature">
        <title>Evolution of genes and genomes on the Drosophila phylogeny.</title>
        <authorList>
            <consortium name="Drosophila 12 genomes consortium"/>
        </authorList>
    </citation>
    <scope>NUCLEOTIDE SEQUENCE [LARGE SCALE GENOMIC DNA]</scope>
    <source>
        <strain evidence="5">Tucson 15010-1051.87</strain>
    </source>
</reference>
<feature type="transit peptide" description="Mitochondrion" evidence="2">
    <location>
        <begin position="1"/>
        <end status="unknown"/>
    </location>
</feature>
<feature type="chain" id="PRO_0000388703" description="NFU1 iron-sulfur cluster scaffold homolog, mitochondrial" evidence="2">
    <location>
        <begin status="unknown"/>
        <end position="298"/>
    </location>
</feature>
<feature type="region of interest" description="NifU" evidence="2">
    <location>
        <begin position="190"/>
        <end position="258"/>
    </location>
</feature>
<feature type="region of interest" description="Disordered" evidence="3">
    <location>
        <begin position="279"/>
        <end position="298"/>
    </location>
</feature>
<feature type="compositionally biased region" description="Polar residues" evidence="3">
    <location>
        <begin position="279"/>
        <end position="288"/>
    </location>
</feature>
<feature type="binding site" evidence="1">
    <location>
        <position position="227"/>
    </location>
    <ligand>
        <name>[4Fe-4S] cluster</name>
        <dbReference type="ChEBI" id="CHEBI:49883"/>
        <note>ligand shared between dimeric partners</note>
    </ligand>
</feature>
<feature type="binding site" evidence="1">
    <location>
        <position position="230"/>
    </location>
    <ligand>
        <name>[4Fe-4S] cluster</name>
        <dbReference type="ChEBI" id="CHEBI:49883"/>
        <note>ligand shared between dimeric partners</note>
    </ligand>
</feature>
<name>NFU1_DROVI</name>
<protein>
    <recommendedName>
        <fullName evidence="1">NFU1 iron-sulfur cluster scaffold homolog, mitochondrial</fullName>
    </recommendedName>
</protein>
<gene>
    <name type="ORF">GJ19011</name>
</gene>
<keyword id="KW-0408">Iron</keyword>
<keyword id="KW-0411">Iron-sulfur</keyword>
<keyword id="KW-0479">Metal-binding</keyword>
<keyword id="KW-0496">Mitochondrion</keyword>
<keyword id="KW-1185">Reference proteome</keyword>
<keyword id="KW-0809">Transit peptide</keyword>
<proteinExistence type="inferred from homology"/>
<dbReference type="EMBL" id="CH940651">
    <property type="protein sequence ID" value="EDW65250.1"/>
    <property type="molecule type" value="Genomic_DNA"/>
</dbReference>
<dbReference type="SMR" id="B4M375"/>
<dbReference type="FunCoup" id="B4M375">
    <property type="interactions" value="1037"/>
</dbReference>
<dbReference type="STRING" id="7244.B4M375"/>
<dbReference type="EnsemblMetazoa" id="FBtr0234936">
    <property type="protein sequence ID" value="FBpp0233428"/>
    <property type="gene ID" value="FBgn0206157"/>
</dbReference>
<dbReference type="EnsemblMetazoa" id="XM_002055013.3">
    <property type="protein sequence ID" value="XP_002055049.1"/>
    <property type="gene ID" value="LOC6631306"/>
</dbReference>
<dbReference type="GeneID" id="6631306"/>
<dbReference type="KEGG" id="dvi:6631306"/>
<dbReference type="eggNOG" id="KOG2358">
    <property type="taxonomic scope" value="Eukaryota"/>
</dbReference>
<dbReference type="HOGENOM" id="CLU_060555_0_2_1"/>
<dbReference type="InParanoid" id="B4M375"/>
<dbReference type="OMA" id="AIMEHYM"/>
<dbReference type="OrthoDB" id="565552at2759"/>
<dbReference type="PhylomeDB" id="B4M375"/>
<dbReference type="Proteomes" id="UP000008792">
    <property type="component" value="Unassembled WGS sequence"/>
</dbReference>
<dbReference type="GO" id="GO:0005739">
    <property type="term" value="C:mitochondrion"/>
    <property type="evidence" value="ECO:0007669"/>
    <property type="project" value="UniProtKB-SubCell"/>
</dbReference>
<dbReference type="GO" id="GO:0005506">
    <property type="term" value="F:iron ion binding"/>
    <property type="evidence" value="ECO:0007669"/>
    <property type="project" value="InterPro"/>
</dbReference>
<dbReference type="GO" id="GO:0051536">
    <property type="term" value="F:iron-sulfur cluster binding"/>
    <property type="evidence" value="ECO:0007669"/>
    <property type="project" value="UniProtKB-KW"/>
</dbReference>
<dbReference type="GO" id="GO:0016226">
    <property type="term" value="P:iron-sulfur cluster assembly"/>
    <property type="evidence" value="ECO:0007669"/>
    <property type="project" value="InterPro"/>
</dbReference>
<dbReference type="FunFam" id="3.30.300.130:FF:000001">
    <property type="entry name" value="NFU1 iron-sulfur cluster scaffold"/>
    <property type="match status" value="1"/>
</dbReference>
<dbReference type="FunFam" id="3.30.1370.70:FF:000002">
    <property type="entry name" value="NFU1 iron-sulfur cluster scaffold homolog, mitochondrial"/>
    <property type="match status" value="1"/>
</dbReference>
<dbReference type="Gene3D" id="3.30.300.130">
    <property type="entry name" value="Fe-S cluster assembly (FSCA)"/>
    <property type="match status" value="1"/>
</dbReference>
<dbReference type="Gene3D" id="3.30.1370.70">
    <property type="entry name" value="Scaffold protein Nfu/NifU, N-terminal domain"/>
    <property type="match status" value="1"/>
</dbReference>
<dbReference type="InterPro" id="IPR034904">
    <property type="entry name" value="FSCA_dom_sf"/>
</dbReference>
<dbReference type="InterPro" id="IPR014824">
    <property type="entry name" value="Nfu/NifU_N"/>
</dbReference>
<dbReference type="InterPro" id="IPR036498">
    <property type="entry name" value="Nfu/NifU_N_sf"/>
</dbReference>
<dbReference type="InterPro" id="IPR001075">
    <property type="entry name" value="NIF_FeS_clus_asmbl_NifU_C"/>
</dbReference>
<dbReference type="PANTHER" id="PTHR11178">
    <property type="entry name" value="IRON-SULFUR CLUSTER SCAFFOLD PROTEIN NFU-RELATED"/>
    <property type="match status" value="1"/>
</dbReference>
<dbReference type="PANTHER" id="PTHR11178:SF1">
    <property type="entry name" value="NFU1 IRON-SULFUR CLUSTER SCAFFOLD HOMOLOG, MITOCHONDRIAL"/>
    <property type="match status" value="1"/>
</dbReference>
<dbReference type="Pfam" id="PF08712">
    <property type="entry name" value="Nfu_N"/>
    <property type="match status" value="1"/>
</dbReference>
<dbReference type="Pfam" id="PF01106">
    <property type="entry name" value="NifU"/>
    <property type="match status" value="1"/>
</dbReference>
<dbReference type="SMART" id="SM00932">
    <property type="entry name" value="Nfu_N"/>
    <property type="match status" value="1"/>
</dbReference>
<dbReference type="SUPFAM" id="SSF117916">
    <property type="entry name" value="Fe-S cluster assembly (FSCA) domain-like"/>
    <property type="match status" value="1"/>
</dbReference>
<dbReference type="SUPFAM" id="SSF110836">
    <property type="entry name" value="Hypothetical protein SAV1430"/>
    <property type="match status" value="1"/>
</dbReference>
<accession>B4M375</accession>
<evidence type="ECO:0000250" key="1">
    <source>
        <dbReference type="UniProtKB" id="Q9UMS0"/>
    </source>
</evidence>
<evidence type="ECO:0000255" key="2"/>
<evidence type="ECO:0000256" key="3">
    <source>
        <dbReference type="SAM" id="MobiDB-lite"/>
    </source>
</evidence>
<evidence type="ECO:0000305" key="4"/>
<evidence type="ECO:0000312" key="5">
    <source>
        <dbReference type="EMBL" id="EDW65250.1"/>
    </source>
</evidence>